<evidence type="ECO:0000250" key="1"/>
<evidence type="ECO:0000250" key="2">
    <source>
        <dbReference type="UniProtKB" id="P02709"/>
    </source>
</evidence>
<evidence type="ECO:0000250" key="3">
    <source>
        <dbReference type="UniProtKB" id="P04757"/>
    </source>
</evidence>
<evidence type="ECO:0000250" key="4">
    <source>
        <dbReference type="UniProtKB" id="P43681"/>
    </source>
</evidence>
<evidence type="ECO:0000250" key="5">
    <source>
        <dbReference type="UniProtKB" id="Q9R0W9"/>
    </source>
</evidence>
<evidence type="ECO:0000255" key="6"/>
<evidence type="ECO:0000269" key="7">
    <source>
    </source>
</evidence>
<evidence type="ECO:0000269" key="8">
    <source>
    </source>
</evidence>
<evidence type="ECO:0000303" key="9">
    <source>
    </source>
</evidence>
<evidence type="ECO:0000305" key="10"/>
<evidence type="ECO:0000305" key="11">
    <source>
    </source>
</evidence>
<evidence type="ECO:0000312" key="12">
    <source>
        <dbReference type="HGNC" id="HGNC:15963"/>
    </source>
</evidence>
<reference key="1">
    <citation type="journal article" date="1996" name="J. Mol. Neurosci.">
        <title>Comparative structure of human neuronal alpha 2-alpha 7 and beta 2-beta 4 nicotinic acetylcholine receptor subunits and functional expression of the alpha 2, alpha 3, alpha 4, alpha 7, beta 2, and beta 4 subunits.</title>
        <authorList>
            <person name="Elliott K.J."/>
            <person name="Ellis S.B."/>
            <person name="Berckhan K.J."/>
            <person name="Urrutia A."/>
            <person name="Chavez-Noriega L.E."/>
            <person name="Johnson E.C."/>
            <person name="Velicelebi G."/>
            <person name="Harpold M.M."/>
        </authorList>
    </citation>
    <scope>NUCLEOTIDE SEQUENCE [MRNA] (ISOFORM 1)</scope>
    <source>
        <tissue>Substantia nigra</tissue>
    </source>
</reference>
<reference key="2">
    <citation type="submission" date="1998-01" db="EMBL/GenBank/DDBJ databases">
        <authorList>
            <person name="Groot Kormelink P.J."/>
        </authorList>
    </citation>
    <scope>NUCLEOTIDE SEQUENCE [MRNA] (ISOFORM 1)</scope>
</reference>
<reference key="3">
    <citation type="submission" date="2002-02" db="EMBL/GenBank/DDBJ databases">
        <title>Alu and other elements in the promoter of human nAChR A6 gene (CHNRA6) direct transcriptional repression.</title>
        <authorList>
            <person name="Ebihara M."/>
            <person name="Ohba H."/>
            <person name="Yoshikawa T."/>
        </authorList>
    </citation>
    <scope>NUCLEOTIDE SEQUENCE [GENOMIC DNA]</scope>
</reference>
<reference key="4">
    <citation type="journal article" date="2004" name="Nat. Genet.">
        <title>Complete sequencing and characterization of 21,243 full-length human cDNAs.</title>
        <authorList>
            <person name="Ota T."/>
            <person name="Suzuki Y."/>
            <person name="Nishikawa T."/>
            <person name="Otsuki T."/>
            <person name="Sugiyama T."/>
            <person name="Irie R."/>
            <person name="Wakamatsu A."/>
            <person name="Hayashi K."/>
            <person name="Sato H."/>
            <person name="Nagai K."/>
            <person name="Kimura K."/>
            <person name="Makita H."/>
            <person name="Sekine M."/>
            <person name="Obayashi M."/>
            <person name="Nishi T."/>
            <person name="Shibahara T."/>
            <person name="Tanaka T."/>
            <person name="Ishii S."/>
            <person name="Yamamoto J."/>
            <person name="Saito K."/>
            <person name="Kawai Y."/>
            <person name="Isono Y."/>
            <person name="Nakamura Y."/>
            <person name="Nagahari K."/>
            <person name="Murakami K."/>
            <person name="Yasuda T."/>
            <person name="Iwayanagi T."/>
            <person name="Wagatsuma M."/>
            <person name="Shiratori A."/>
            <person name="Sudo H."/>
            <person name="Hosoiri T."/>
            <person name="Kaku Y."/>
            <person name="Kodaira H."/>
            <person name="Kondo H."/>
            <person name="Sugawara M."/>
            <person name="Takahashi M."/>
            <person name="Kanda K."/>
            <person name="Yokoi T."/>
            <person name="Furuya T."/>
            <person name="Kikkawa E."/>
            <person name="Omura Y."/>
            <person name="Abe K."/>
            <person name="Kamihara K."/>
            <person name="Katsuta N."/>
            <person name="Sato K."/>
            <person name="Tanikawa M."/>
            <person name="Yamazaki M."/>
            <person name="Ninomiya K."/>
            <person name="Ishibashi T."/>
            <person name="Yamashita H."/>
            <person name="Murakawa K."/>
            <person name="Fujimori K."/>
            <person name="Tanai H."/>
            <person name="Kimata M."/>
            <person name="Watanabe M."/>
            <person name="Hiraoka S."/>
            <person name="Chiba Y."/>
            <person name="Ishida S."/>
            <person name="Ono Y."/>
            <person name="Takiguchi S."/>
            <person name="Watanabe S."/>
            <person name="Yosida M."/>
            <person name="Hotuta T."/>
            <person name="Kusano J."/>
            <person name="Kanehori K."/>
            <person name="Takahashi-Fujii A."/>
            <person name="Hara H."/>
            <person name="Tanase T.-O."/>
            <person name="Nomura Y."/>
            <person name="Togiya S."/>
            <person name="Komai F."/>
            <person name="Hara R."/>
            <person name="Takeuchi K."/>
            <person name="Arita M."/>
            <person name="Imose N."/>
            <person name="Musashino K."/>
            <person name="Yuuki H."/>
            <person name="Oshima A."/>
            <person name="Sasaki N."/>
            <person name="Aotsuka S."/>
            <person name="Yoshikawa Y."/>
            <person name="Matsunawa H."/>
            <person name="Ichihara T."/>
            <person name="Shiohata N."/>
            <person name="Sano S."/>
            <person name="Moriya S."/>
            <person name="Momiyama H."/>
            <person name="Satoh N."/>
            <person name="Takami S."/>
            <person name="Terashima Y."/>
            <person name="Suzuki O."/>
            <person name="Nakagawa S."/>
            <person name="Senoh A."/>
            <person name="Mizoguchi H."/>
            <person name="Goto Y."/>
            <person name="Shimizu F."/>
            <person name="Wakebe H."/>
            <person name="Hishigaki H."/>
            <person name="Watanabe T."/>
            <person name="Sugiyama A."/>
            <person name="Takemoto M."/>
            <person name="Kawakami B."/>
            <person name="Yamazaki M."/>
            <person name="Watanabe K."/>
            <person name="Kumagai A."/>
            <person name="Itakura S."/>
            <person name="Fukuzumi Y."/>
            <person name="Fujimori Y."/>
            <person name="Komiyama M."/>
            <person name="Tashiro H."/>
            <person name="Tanigami A."/>
            <person name="Fujiwara T."/>
            <person name="Ono T."/>
            <person name="Yamada K."/>
            <person name="Fujii Y."/>
            <person name="Ozaki K."/>
            <person name="Hirao M."/>
            <person name="Ohmori Y."/>
            <person name="Kawabata A."/>
            <person name="Hikiji T."/>
            <person name="Kobatake N."/>
            <person name="Inagaki H."/>
            <person name="Ikema Y."/>
            <person name="Okamoto S."/>
            <person name="Okitani R."/>
            <person name="Kawakami T."/>
            <person name="Noguchi S."/>
            <person name="Itoh T."/>
            <person name="Shigeta K."/>
            <person name="Senba T."/>
            <person name="Matsumura K."/>
            <person name="Nakajima Y."/>
            <person name="Mizuno T."/>
            <person name="Morinaga M."/>
            <person name="Sasaki M."/>
            <person name="Togashi T."/>
            <person name="Oyama M."/>
            <person name="Hata H."/>
            <person name="Watanabe M."/>
            <person name="Komatsu T."/>
            <person name="Mizushima-Sugano J."/>
            <person name="Satoh T."/>
            <person name="Shirai Y."/>
            <person name="Takahashi Y."/>
            <person name="Nakagawa K."/>
            <person name="Okumura K."/>
            <person name="Nagase T."/>
            <person name="Nomura N."/>
            <person name="Kikuchi H."/>
            <person name="Masuho Y."/>
            <person name="Yamashita R."/>
            <person name="Nakai K."/>
            <person name="Yada T."/>
            <person name="Nakamura Y."/>
            <person name="Ohara O."/>
            <person name="Isogai T."/>
            <person name="Sugano S."/>
        </authorList>
    </citation>
    <scope>NUCLEOTIDE SEQUENCE [LARGE SCALE MRNA] (ISOFORMS 1 AND 2)</scope>
</reference>
<reference key="5">
    <citation type="journal article" date="2006" name="Nature">
        <title>DNA sequence and analysis of human chromosome 8.</title>
        <authorList>
            <person name="Nusbaum C."/>
            <person name="Mikkelsen T.S."/>
            <person name="Zody M.C."/>
            <person name="Asakawa S."/>
            <person name="Taudien S."/>
            <person name="Garber M."/>
            <person name="Kodira C.D."/>
            <person name="Schueler M.G."/>
            <person name="Shimizu A."/>
            <person name="Whittaker C.A."/>
            <person name="Chang J.L."/>
            <person name="Cuomo C.A."/>
            <person name="Dewar K."/>
            <person name="FitzGerald M.G."/>
            <person name="Yang X."/>
            <person name="Allen N.R."/>
            <person name="Anderson S."/>
            <person name="Asakawa T."/>
            <person name="Blechschmidt K."/>
            <person name="Bloom T."/>
            <person name="Borowsky M.L."/>
            <person name="Butler J."/>
            <person name="Cook A."/>
            <person name="Corum B."/>
            <person name="DeArellano K."/>
            <person name="DeCaprio D."/>
            <person name="Dooley K.T."/>
            <person name="Dorris L. III"/>
            <person name="Engels R."/>
            <person name="Gloeckner G."/>
            <person name="Hafez N."/>
            <person name="Hagopian D.S."/>
            <person name="Hall J.L."/>
            <person name="Ishikawa S.K."/>
            <person name="Jaffe D.B."/>
            <person name="Kamat A."/>
            <person name="Kudoh J."/>
            <person name="Lehmann R."/>
            <person name="Lokitsang T."/>
            <person name="Macdonald P."/>
            <person name="Major J.E."/>
            <person name="Matthews C.D."/>
            <person name="Mauceli E."/>
            <person name="Menzel U."/>
            <person name="Mihalev A.H."/>
            <person name="Minoshima S."/>
            <person name="Murayama Y."/>
            <person name="Naylor J.W."/>
            <person name="Nicol R."/>
            <person name="Nguyen C."/>
            <person name="O'Leary S.B."/>
            <person name="O'Neill K."/>
            <person name="Parker S.C.J."/>
            <person name="Polley A."/>
            <person name="Raymond C.K."/>
            <person name="Reichwald K."/>
            <person name="Rodriguez J."/>
            <person name="Sasaki T."/>
            <person name="Schilhabel M."/>
            <person name="Siddiqui R."/>
            <person name="Smith C.L."/>
            <person name="Sneddon T.P."/>
            <person name="Talamas J.A."/>
            <person name="Tenzin P."/>
            <person name="Topham K."/>
            <person name="Venkataraman V."/>
            <person name="Wen G."/>
            <person name="Yamazaki S."/>
            <person name="Young S.K."/>
            <person name="Zeng Q."/>
            <person name="Zimmer A.R."/>
            <person name="Rosenthal A."/>
            <person name="Birren B.W."/>
            <person name="Platzer M."/>
            <person name="Shimizu N."/>
            <person name="Lander E.S."/>
        </authorList>
    </citation>
    <scope>NUCLEOTIDE SEQUENCE [LARGE SCALE GENOMIC DNA]</scope>
</reference>
<reference key="6">
    <citation type="submission" date="2005-09" db="EMBL/GenBank/DDBJ databases">
        <authorList>
            <person name="Mural R.J."/>
            <person name="Istrail S."/>
            <person name="Sutton G.G."/>
            <person name="Florea L."/>
            <person name="Halpern A.L."/>
            <person name="Mobarry C.M."/>
            <person name="Lippert R."/>
            <person name="Walenz B."/>
            <person name="Shatkay H."/>
            <person name="Dew I."/>
            <person name="Miller J.R."/>
            <person name="Flanigan M.J."/>
            <person name="Edwards N.J."/>
            <person name="Bolanos R."/>
            <person name="Fasulo D."/>
            <person name="Halldorsson B.V."/>
            <person name="Hannenhalli S."/>
            <person name="Turner R."/>
            <person name="Yooseph S."/>
            <person name="Lu F."/>
            <person name="Nusskern D.R."/>
            <person name="Shue B.C."/>
            <person name="Zheng X.H."/>
            <person name="Zhong F."/>
            <person name="Delcher A.L."/>
            <person name="Huson D.H."/>
            <person name="Kravitz S.A."/>
            <person name="Mouchard L."/>
            <person name="Reinert K."/>
            <person name="Remington K.A."/>
            <person name="Clark A.G."/>
            <person name="Waterman M.S."/>
            <person name="Eichler E.E."/>
            <person name="Adams M.D."/>
            <person name="Hunkapiller M.W."/>
            <person name="Myers E.W."/>
            <person name="Venter J.C."/>
        </authorList>
    </citation>
    <scope>NUCLEOTIDE SEQUENCE [LARGE SCALE GENOMIC DNA]</scope>
</reference>
<reference key="7">
    <citation type="journal article" date="2004" name="Genome Res.">
        <title>The status, quality, and expansion of the NIH full-length cDNA project: the Mammalian Gene Collection (MGC).</title>
        <authorList>
            <consortium name="The MGC Project Team"/>
        </authorList>
    </citation>
    <scope>NUCLEOTIDE SEQUENCE [LARGE SCALE MRNA] (ISOFORM 1)</scope>
    <source>
        <tissue>Skin</tissue>
    </source>
</reference>
<reference key="8">
    <citation type="journal article" date="2006" name="Mol. Pharmacol.">
        <title>Beta3 subunits promote expression and nicotine-induced up-regulation of human nicotinic alpha6* nicotinic acetylcholine receptors expressed in transfected cell lines.</title>
        <authorList>
            <person name="Tumkosit P."/>
            <person name="Kuryatov A."/>
            <person name="Luo J."/>
            <person name="Lindstrom J."/>
        </authorList>
    </citation>
    <scope>FUNCTION</scope>
    <scope>SUBUNIT</scope>
    <scope>ACTIVITY REGULATION</scope>
</reference>
<reference key="9">
    <citation type="journal article" date="2016" name="J. Neurochem.">
        <title>Functional interaction between Lypd6 and nicotinic acetylcholine receptors.</title>
        <authorList>
            <person name="Arvaniti M."/>
            <person name="Jensen M.M."/>
            <person name="Soni N."/>
            <person name="Wang H."/>
            <person name="Klein A.B."/>
            <person name="Thiriet N."/>
            <person name="Pinborg L.H."/>
            <person name="Muldoon P.P."/>
            <person name="Wienecke J."/>
            <person name="Imad Damaj M."/>
            <person name="Kohlmeier K.A."/>
            <person name="Gondre-Lewis M.C."/>
            <person name="Mikkelsen J.D."/>
            <person name="Thomsen M.S."/>
        </authorList>
    </citation>
    <scope>INTERACTION WITH LYPD6</scope>
</reference>
<proteinExistence type="evidence at protein level"/>
<feature type="signal peptide" evidence="6">
    <location>
        <begin position="1"/>
        <end position="25"/>
    </location>
</feature>
<feature type="chain" id="PRO_0000000360" description="Neuronal acetylcholine receptor subunit alpha-6">
    <location>
        <begin position="26"/>
        <end position="494"/>
    </location>
</feature>
<feature type="topological domain" description="Extracellular">
    <location>
        <begin position="26"/>
        <end position="239"/>
    </location>
</feature>
<feature type="transmembrane region" description="Helical" evidence="6">
    <location>
        <begin position="240"/>
        <end position="264"/>
    </location>
</feature>
<feature type="transmembrane region" description="Helical" evidence="6">
    <location>
        <begin position="272"/>
        <end position="290"/>
    </location>
</feature>
<feature type="transmembrane region" description="Helical" evidence="6">
    <location>
        <begin position="306"/>
        <end position="327"/>
    </location>
</feature>
<feature type="topological domain" description="Cytoplasmic">
    <location>
        <begin position="328"/>
        <end position="465"/>
    </location>
</feature>
<feature type="transmembrane region" description="Helical" evidence="6">
    <location>
        <begin position="466"/>
        <end position="484"/>
    </location>
</feature>
<feature type="modified residue" description="Phosphoserine" evidence="3">
    <location>
        <position position="401"/>
    </location>
</feature>
<feature type="glycosylation site" description="N-linked (GlcNAc...) asparagine" evidence="6">
    <location>
        <position position="54"/>
    </location>
</feature>
<feature type="glycosylation site" description="N-linked (GlcNAc...) asparagine" evidence="6">
    <location>
        <position position="171"/>
    </location>
</feature>
<feature type="disulfide bond" evidence="1">
    <location>
        <begin position="158"/>
        <end position="172"/>
    </location>
</feature>
<feature type="disulfide bond" description="Associated with receptor activation" evidence="1">
    <location>
        <begin position="222"/>
        <end position="223"/>
    </location>
</feature>
<feature type="splice variant" id="VSP_042713" description="In isoform 2." evidence="9">
    <location>
        <begin position="74"/>
        <end position="88"/>
    </location>
</feature>
<feature type="sequence variant" id="VAR_048171" description="In dbSNP:rs16891583.">
    <original>N</original>
    <variation>S</variation>
    <location>
        <position position="447"/>
    </location>
</feature>
<name>ACHA6_HUMAN</name>
<sequence length="494" mass="56898">MLTSKGQGFLHGGLCLWLCVFTPFFKGCVGCATEERLFHKLFSHYNQFIRPVENVSDPVTVHFEVAITQLANVDEVNQIMETNLWLRHIWNDYKLRWDPMEYDGIETLRVPADKIWKPDIVLYNNAVGDFQVEGKTKALLKYNGMITWTPPAIFKSSCPMDITFFPFDHQNCSLKFGSWTYDKAEIDLLIIGSKVDMNDFWENSEWEIIDASGYKHDIKYNCCEEIYTDITYSFYIRRLPMFYTINLIIPCLFISFLTVLVFYLPSDCGEKVTLCISVLLSLTVFLLVITETIPSTSLVVPLVGEYLLFTMIFVTLSIVVTVFVLNIHYRTPTTHTMPRWVKTVFLKLLPQVLLMRWPLDKTRGTGSDAVPRGLARRPAKGKLASHGEPRHLKECFHCHKSNELATSKRRLSHQPLQWVVENSEHSPEVEDVINSVQFIAENMKSHNETKEVEDDWKYVAMVVDRVFLWVFIIVCVFGTAGLFLQPLLGNTGKS</sequence>
<gene>
    <name evidence="12" type="primary">CHRNA6</name>
</gene>
<dbReference type="EMBL" id="U62435">
    <property type="protein sequence ID" value="AAB40113.1"/>
    <property type="molecule type" value="mRNA"/>
</dbReference>
<dbReference type="EMBL" id="Y16282">
    <property type="protein sequence ID" value="CAA76155.1"/>
    <property type="molecule type" value="mRNA"/>
</dbReference>
<dbReference type="EMBL" id="AB079251">
    <property type="protein sequence ID" value="BAC06855.1"/>
    <property type="molecule type" value="Genomic_DNA"/>
</dbReference>
<dbReference type="EMBL" id="AK298798">
    <property type="protein sequence ID" value="BAG60933.1"/>
    <property type="molecule type" value="mRNA"/>
</dbReference>
<dbReference type="EMBL" id="AK313521">
    <property type="protein sequence ID" value="BAG36301.1"/>
    <property type="molecule type" value="mRNA"/>
</dbReference>
<dbReference type="EMBL" id="AC087533">
    <property type="status" value="NOT_ANNOTATED_CDS"/>
    <property type="molecule type" value="Genomic_DNA"/>
</dbReference>
<dbReference type="EMBL" id="CH471080">
    <property type="protein sequence ID" value="EAW63207.1"/>
    <property type="molecule type" value="Genomic_DNA"/>
</dbReference>
<dbReference type="EMBL" id="BC014456">
    <property type="protein sequence ID" value="AAH14456.1"/>
    <property type="molecule type" value="mRNA"/>
</dbReference>
<dbReference type="CCDS" id="CCDS56536.1">
    <molecule id="Q15825-2"/>
</dbReference>
<dbReference type="CCDS" id="CCDS6135.1">
    <molecule id="Q15825-1"/>
</dbReference>
<dbReference type="RefSeq" id="NP_001186208.1">
    <molecule id="Q15825-2"/>
    <property type="nucleotide sequence ID" value="NM_001199279.1"/>
</dbReference>
<dbReference type="RefSeq" id="NP_004189.1">
    <molecule id="Q15825-1"/>
    <property type="nucleotide sequence ID" value="NM_004198.3"/>
</dbReference>
<dbReference type="RefSeq" id="XP_047278352.1">
    <molecule id="Q15825-1"/>
    <property type="nucleotide sequence ID" value="XM_047422396.1"/>
</dbReference>
<dbReference type="RefSeq" id="XP_054217429.1">
    <molecule id="Q15825-1"/>
    <property type="nucleotide sequence ID" value="XM_054361454.1"/>
</dbReference>
<dbReference type="SMR" id="Q15825"/>
<dbReference type="BioGRID" id="114463">
    <property type="interactions" value="1"/>
</dbReference>
<dbReference type="ComplexPortal" id="CPX-213">
    <property type="entry name" value="Neuronal nicotinic acetylcholine receptor complex, alpha3-alpha6-beta4"/>
</dbReference>
<dbReference type="ComplexPortal" id="CPX-2192">
    <property type="entry name" value="Neuronal nicotinic acetylcholine receptor complex, alpha3-alpha6-beta2-beta3"/>
</dbReference>
<dbReference type="FunCoup" id="Q15825">
    <property type="interactions" value="552"/>
</dbReference>
<dbReference type="IntAct" id="Q15825">
    <property type="interactions" value="3"/>
</dbReference>
<dbReference type="STRING" id="9606.ENSP00000276410"/>
<dbReference type="BindingDB" id="Q15825"/>
<dbReference type="ChEMBL" id="CHEMBL2109233"/>
<dbReference type="ChEMBL" id="CHEMBL2109237"/>
<dbReference type="ChEMBL" id="CHEMBL3137285"/>
<dbReference type="ChEMBL" id="CHEMBL4888445"/>
<dbReference type="DrugBank" id="DB00237">
    <property type="generic name" value="Butabarbital"/>
</dbReference>
<dbReference type="DrugBank" id="DB00565">
    <property type="generic name" value="Cisatracurium"/>
</dbReference>
<dbReference type="DrugBank" id="DB09028">
    <property type="generic name" value="Cytisine"/>
</dbReference>
<dbReference type="DrugBank" id="DB00898">
    <property type="generic name" value="Ethanol"/>
</dbReference>
<dbReference type="DrugBank" id="DB00184">
    <property type="generic name" value="Nicotine"/>
</dbReference>
<dbReference type="DrugBank" id="DB00202">
    <property type="generic name" value="Succinylcholine"/>
</dbReference>
<dbReference type="DrugBank" id="DB01273">
    <property type="generic name" value="Varenicline"/>
</dbReference>
<dbReference type="DrugCentral" id="Q15825"/>
<dbReference type="GuidetoPHARMACOLOGY" id="467"/>
<dbReference type="GlyCosmos" id="Q15825">
    <property type="glycosylation" value="2 sites, No reported glycans"/>
</dbReference>
<dbReference type="GlyGen" id="Q15825">
    <property type="glycosylation" value="2 sites"/>
</dbReference>
<dbReference type="iPTMnet" id="Q15825"/>
<dbReference type="PhosphoSitePlus" id="Q15825"/>
<dbReference type="BioMuta" id="CHRNA6"/>
<dbReference type="DMDM" id="2492620"/>
<dbReference type="MassIVE" id="Q15825"/>
<dbReference type="PaxDb" id="9606-ENSP00000276410"/>
<dbReference type="PeptideAtlas" id="Q15825"/>
<dbReference type="ProteomicsDB" id="60777">
    <molecule id="Q15825-1"/>
</dbReference>
<dbReference type="ProteomicsDB" id="60778">
    <molecule id="Q15825-2"/>
</dbReference>
<dbReference type="Antibodypedia" id="24152">
    <property type="antibodies" value="145 antibodies from 26 providers"/>
</dbReference>
<dbReference type="DNASU" id="8973"/>
<dbReference type="Ensembl" id="ENST00000276410.7">
    <molecule id="Q15825-1"/>
    <property type="protein sequence ID" value="ENSP00000276410.3"/>
    <property type="gene ID" value="ENSG00000147434.9"/>
</dbReference>
<dbReference type="Ensembl" id="ENST00000534622.5">
    <molecule id="Q15825-2"/>
    <property type="protein sequence ID" value="ENSP00000433871.1"/>
    <property type="gene ID" value="ENSG00000147434.9"/>
</dbReference>
<dbReference type="GeneID" id="8973"/>
<dbReference type="KEGG" id="hsa:8973"/>
<dbReference type="MANE-Select" id="ENST00000276410.7">
    <property type="protein sequence ID" value="ENSP00000276410.3"/>
    <property type="RefSeq nucleotide sequence ID" value="NM_004198.3"/>
    <property type="RefSeq protein sequence ID" value="NP_004189.1"/>
</dbReference>
<dbReference type="UCSC" id="uc003xpj.5">
    <molecule id="Q15825-1"/>
    <property type="organism name" value="human"/>
</dbReference>
<dbReference type="AGR" id="HGNC:15963"/>
<dbReference type="CTD" id="8973"/>
<dbReference type="DisGeNET" id="8973"/>
<dbReference type="GeneCards" id="CHRNA6"/>
<dbReference type="HGNC" id="HGNC:15963">
    <property type="gene designation" value="CHRNA6"/>
</dbReference>
<dbReference type="HPA" id="ENSG00000147434">
    <property type="expression patterns" value="Tissue enhanced (retina)"/>
</dbReference>
<dbReference type="MIM" id="606888">
    <property type="type" value="gene"/>
</dbReference>
<dbReference type="neXtProt" id="NX_Q15825"/>
<dbReference type="OpenTargets" id="ENSG00000147434"/>
<dbReference type="PharmGKB" id="PA26492"/>
<dbReference type="VEuPathDB" id="HostDB:ENSG00000147434"/>
<dbReference type="eggNOG" id="KOG3645">
    <property type="taxonomic scope" value="Eukaryota"/>
</dbReference>
<dbReference type="GeneTree" id="ENSGT00940000158062"/>
<dbReference type="HOGENOM" id="CLU_018074_1_0_1"/>
<dbReference type="InParanoid" id="Q15825"/>
<dbReference type="OMA" id="HKDTKLH"/>
<dbReference type="OrthoDB" id="5975154at2759"/>
<dbReference type="PAN-GO" id="Q15825">
    <property type="GO annotations" value="9 GO annotations based on evolutionary models"/>
</dbReference>
<dbReference type="PhylomeDB" id="Q15825"/>
<dbReference type="TreeFam" id="TF315605"/>
<dbReference type="PathwayCommons" id="Q15825"/>
<dbReference type="Reactome" id="R-HSA-629594">
    <property type="pathway name" value="Highly calcium permeable postsynaptic nicotinic acetylcholine receptors"/>
</dbReference>
<dbReference type="Reactome" id="R-HSA-629597">
    <property type="pathway name" value="Highly calcium permeable nicotinic acetylcholine receptors"/>
</dbReference>
<dbReference type="SignaLink" id="Q15825"/>
<dbReference type="BioGRID-ORCS" id="8973">
    <property type="hits" value="9 hits in 1145 CRISPR screens"/>
</dbReference>
<dbReference type="ChiTaRS" id="CHRNA6">
    <property type="organism name" value="human"/>
</dbReference>
<dbReference type="GeneWiki" id="CHRNA6"/>
<dbReference type="GenomeRNAi" id="8973"/>
<dbReference type="Pharos" id="Q15825">
    <property type="development level" value="Tchem"/>
</dbReference>
<dbReference type="PRO" id="PR:Q15825"/>
<dbReference type="Proteomes" id="UP000005640">
    <property type="component" value="Chromosome 8"/>
</dbReference>
<dbReference type="RNAct" id="Q15825">
    <property type="molecule type" value="protein"/>
</dbReference>
<dbReference type="Bgee" id="ENSG00000147434">
    <property type="expression patterns" value="Expressed in male germ line stem cell (sensu Vertebrata) in testis and 72 other cell types or tissues"/>
</dbReference>
<dbReference type="ExpressionAtlas" id="Q15825">
    <property type="expression patterns" value="baseline and differential"/>
</dbReference>
<dbReference type="GO" id="GO:0005892">
    <property type="term" value="C:acetylcholine-gated channel complex"/>
    <property type="evidence" value="ECO:0000314"/>
    <property type="project" value="UniProt"/>
</dbReference>
<dbReference type="GO" id="GO:0034703">
    <property type="term" value="C:cation channel complex"/>
    <property type="evidence" value="ECO:0000314"/>
    <property type="project" value="UniProt"/>
</dbReference>
<dbReference type="GO" id="GO:0098691">
    <property type="term" value="C:dopaminergic synapse"/>
    <property type="evidence" value="ECO:0000250"/>
    <property type="project" value="UniProtKB"/>
</dbReference>
<dbReference type="GO" id="GO:0043005">
    <property type="term" value="C:neuron projection"/>
    <property type="evidence" value="ECO:0000318"/>
    <property type="project" value="GO_Central"/>
</dbReference>
<dbReference type="GO" id="GO:0098878">
    <property type="term" value="C:neurotransmitter receptor complex"/>
    <property type="evidence" value="ECO:0000314"/>
    <property type="project" value="UniProt"/>
</dbReference>
<dbReference type="GO" id="GO:0005886">
    <property type="term" value="C:plasma membrane"/>
    <property type="evidence" value="ECO:0000318"/>
    <property type="project" value="GO_Central"/>
</dbReference>
<dbReference type="GO" id="GO:0045211">
    <property type="term" value="C:postsynaptic membrane"/>
    <property type="evidence" value="ECO:0007669"/>
    <property type="project" value="UniProtKB-KW"/>
</dbReference>
<dbReference type="GO" id="GO:0042734">
    <property type="term" value="C:presynaptic membrane"/>
    <property type="evidence" value="ECO:0000250"/>
    <property type="project" value="UniProtKB"/>
</dbReference>
<dbReference type="GO" id="GO:0045202">
    <property type="term" value="C:synapse"/>
    <property type="evidence" value="ECO:0000318"/>
    <property type="project" value="GO_Central"/>
</dbReference>
<dbReference type="GO" id="GO:0015464">
    <property type="term" value="F:acetylcholine receptor activity"/>
    <property type="evidence" value="ECO:0000304"/>
    <property type="project" value="ProtInc"/>
</dbReference>
<dbReference type="GO" id="GO:0022848">
    <property type="term" value="F:acetylcholine-gated monoatomic cation-selective channel activity"/>
    <property type="evidence" value="ECO:0000250"/>
    <property type="project" value="UniProtKB"/>
</dbReference>
<dbReference type="GO" id="GO:0095500">
    <property type="term" value="P:acetylcholine receptor signaling pathway"/>
    <property type="evidence" value="ECO:0000318"/>
    <property type="project" value="GO_Central"/>
</dbReference>
<dbReference type="GO" id="GO:0035095">
    <property type="term" value="P:behavioral response to nicotine"/>
    <property type="evidence" value="ECO:0000250"/>
    <property type="project" value="UniProtKB"/>
</dbReference>
<dbReference type="GO" id="GO:0007268">
    <property type="term" value="P:chemical synaptic transmission"/>
    <property type="evidence" value="ECO:0000304"/>
    <property type="project" value="ProtInc"/>
</dbReference>
<dbReference type="GO" id="GO:0051899">
    <property type="term" value="P:membrane depolarization"/>
    <property type="evidence" value="ECO:0000318"/>
    <property type="project" value="GO_Central"/>
</dbReference>
<dbReference type="GO" id="GO:0034220">
    <property type="term" value="P:monoatomic ion transmembrane transport"/>
    <property type="evidence" value="ECO:0000318"/>
    <property type="project" value="GO_Central"/>
</dbReference>
<dbReference type="GO" id="GO:0007274">
    <property type="term" value="P:neuromuscular synaptic transmission"/>
    <property type="evidence" value="ECO:0000318"/>
    <property type="project" value="GO_Central"/>
</dbReference>
<dbReference type="GO" id="GO:0099171">
    <property type="term" value="P:presynaptic modulation of chemical synaptic transmission"/>
    <property type="evidence" value="ECO:0007669"/>
    <property type="project" value="Ensembl"/>
</dbReference>
<dbReference type="GO" id="GO:0014059">
    <property type="term" value="P:regulation of dopamine secretion"/>
    <property type="evidence" value="ECO:0000250"/>
    <property type="project" value="UniProtKB"/>
</dbReference>
<dbReference type="GO" id="GO:0035094">
    <property type="term" value="P:response to nicotine"/>
    <property type="evidence" value="ECO:0000318"/>
    <property type="project" value="GO_Central"/>
</dbReference>
<dbReference type="GO" id="GO:0007165">
    <property type="term" value="P:signal transduction"/>
    <property type="evidence" value="ECO:0000304"/>
    <property type="project" value="ProtInc"/>
</dbReference>
<dbReference type="GO" id="GO:0007271">
    <property type="term" value="P:synaptic transmission, cholinergic"/>
    <property type="evidence" value="ECO:0000318"/>
    <property type="project" value="GO_Central"/>
</dbReference>
<dbReference type="CDD" id="cd19064">
    <property type="entry name" value="LGIC_TM_nAChR"/>
    <property type="match status" value="1"/>
</dbReference>
<dbReference type="FunFam" id="2.70.170.10:FF:000008">
    <property type="entry name" value="Cholinergic receptor nicotinic alpha 6 subunit"/>
    <property type="match status" value="1"/>
</dbReference>
<dbReference type="FunFam" id="1.20.58.390:FF:000017">
    <property type="entry name" value="Neuronal acetylcholine receptor subunit alpha-3"/>
    <property type="match status" value="1"/>
</dbReference>
<dbReference type="FunFam" id="1.20.58.390:FF:000001">
    <property type="entry name" value="Neuronal nicotinic acetylcholine receptor subunit 3"/>
    <property type="match status" value="1"/>
</dbReference>
<dbReference type="Gene3D" id="2.70.170.10">
    <property type="entry name" value="Neurotransmitter-gated ion-channel ligand-binding domain"/>
    <property type="match status" value="1"/>
</dbReference>
<dbReference type="Gene3D" id="1.20.58.390">
    <property type="entry name" value="Neurotransmitter-gated ion-channel transmembrane domain"/>
    <property type="match status" value="2"/>
</dbReference>
<dbReference type="InterPro" id="IPR006202">
    <property type="entry name" value="Neur_chan_lig-bd"/>
</dbReference>
<dbReference type="InterPro" id="IPR036734">
    <property type="entry name" value="Neur_chan_lig-bd_sf"/>
</dbReference>
<dbReference type="InterPro" id="IPR006201">
    <property type="entry name" value="Neur_channel"/>
</dbReference>
<dbReference type="InterPro" id="IPR036719">
    <property type="entry name" value="Neuro-gated_channel_TM_sf"/>
</dbReference>
<dbReference type="InterPro" id="IPR038050">
    <property type="entry name" value="Neuro_actylchol_rec"/>
</dbReference>
<dbReference type="InterPro" id="IPR006029">
    <property type="entry name" value="Neurotrans-gated_channel_TM"/>
</dbReference>
<dbReference type="InterPro" id="IPR018000">
    <property type="entry name" value="Neurotransmitter_ion_chnl_CS"/>
</dbReference>
<dbReference type="InterPro" id="IPR002394">
    <property type="entry name" value="Nicotinic_acetylcholine_rcpt"/>
</dbReference>
<dbReference type="NCBIfam" id="TIGR00860">
    <property type="entry name" value="LIC"/>
    <property type="match status" value="1"/>
</dbReference>
<dbReference type="PANTHER" id="PTHR18945">
    <property type="entry name" value="NEUROTRANSMITTER GATED ION CHANNEL"/>
    <property type="match status" value="1"/>
</dbReference>
<dbReference type="Pfam" id="PF02931">
    <property type="entry name" value="Neur_chan_LBD"/>
    <property type="match status" value="1"/>
</dbReference>
<dbReference type="Pfam" id="PF02932">
    <property type="entry name" value="Neur_chan_memb"/>
    <property type="match status" value="1"/>
</dbReference>
<dbReference type="PRINTS" id="PR00254">
    <property type="entry name" value="NICOTINICR"/>
</dbReference>
<dbReference type="PRINTS" id="PR00252">
    <property type="entry name" value="NRIONCHANNEL"/>
</dbReference>
<dbReference type="SUPFAM" id="SSF90112">
    <property type="entry name" value="Neurotransmitter-gated ion-channel transmembrane pore"/>
    <property type="match status" value="1"/>
</dbReference>
<dbReference type="SUPFAM" id="SSF63712">
    <property type="entry name" value="Nicotinic receptor ligand binding domain-like"/>
    <property type="match status" value="1"/>
</dbReference>
<dbReference type="PROSITE" id="PS00236">
    <property type="entry name" value="NEUROTR_ION_CHANNEL"/>
    <property type="match status" value="1"/>
</dbReference>
<accession>Q15825</accession>
<accession>B2R8V4</accession>
<accession>B4DQH1</accession>
<protein>
    <recommendedName>
        <fullName>Neuronal acetylcholine receptor subunit alpha-6</fullName>
    </recommendedName>
</protein>
<comment type="function">
    <text evidence="5 7 11">Component of neuronal acetylcholine receptors (nAChRs) that function as pentameric, ligand-gated cation channels with high calcium permeability among other activities. nAChRs are excitatory neurotrasnmitter receptors formed by a collection of nAChR subunits known to mediate synaptic transmission in the nervous system and the neuromuscular junction. Each nAchR subunit confers differential attributes to channel properties, including activation, deactivation and desensitization kinetics, pH sensitivity, cation permeability, and binding to allosteric modulators (Probable). CHRNA6 forms pentameric channels with CHRNB2, CHRNB3 and CHRNA4 that exhibit high sensitivity to ACh and nicotine and are predominantly expressed in only a few brain areas, including dopaminergic neurons, norepirephrine neurons and cells of the visual system (PubMed:16835356). nAChrs containing CHRNA6 subunits mediate endogenous cholinergic modulation of dopamine and gamma-aminobutyric acid (GABA) release in response to nicotine at nerve terminals.</text>
</comment>
<comment type="catalytic activity">
    <reaction evidence="4">
        <text>Ca(2+)(in) = Ca(2+)(out)</text>
        <dbReference type="Rhea" id="RHEA:29671"/>
        <dbReference type="ChEBI" id="CHEBI:29108"/>
    </reaction>
</comment>
<comment type="catalytic activity">
    <reaction evidence="2">
        <text>K(+)(in) = K(+)(out)</text>
        <dbReference type="Rhea" id="RHEA:29463"/>
        <dbReference type="ChEBI" id="CHEBI:29103"/>
    </reaction>
</comment>
<comment type="catalytic activity">
    <reaction evidence="2">
        <text>Na(+)(in) = Na(+)(out)</text>
        <dbReference type="Rhea" id="RHEA:34963"/>
        <dbReference type="ChEBI" id="CHEBI:29101"/>
    </reaction>
</comment>
<comment type="activity regulation">
    <text evidence="5 7">Activated by a myriad of ligands such as acetylcholine, cytisine and nicotine (PubMed:16835356). CHRNA6 nAChR activity is inhibited by the antagonists alpha-conotoxin MII and PIA, a small disulfide-constrained peptides from cone snails.</text>
</comment>
<comment type="subunit">
    <text evidence="5 7 8">Neuronal AChR is composed of two different types of subunits: alpha and non-alpha (beta). CHRNA6/alpha-6 subunit can be combined to CHRNB2/beta-2, CHRNA4/alpha-4 and CHRNB3/beta-3 to give rise to functional receptors (PubMed:16835356). Heteropentamers containing CHRNB3 have an stoichiometry of (CHRNA6:CHRNB2)2:CHRNB3 (PubMed:16835356). Interacts with LYPD6 (PubMed:27344019).</text>
</comment>
<comment type="subcellular location">
    <subcellularLocation>
        <location evidence="5">Synaptic cell membrane</location>
        <topology evidence="6">Multi-pass membrane protein</topology>
    </subcellularLocation>
</comment>
<comment type="alternative products">
    <event type="alternative splicing"/>
    <isoform>
        <id>Q15825-1</id>
        <name>1</name>
        <sequence type="displayed"/>
    </isoform>
    <isoform>
        <id>Q15825-2</id>
        <name>2</name>
        <sequence type="described" ref="VSP_042713"/>
    </isoform>
</comment>
<comment type="similarity">
    <text evidence="10">Belongs to the ligand-gated ion channel (TC 1.A.9) family. Acetylcholine receptor (TC 1.A.9.1) subfamily. Alpha-6/CHRNA6 sub-subfamily.</text>
</comment>
<keyword id="KW-0025">Alternative splicing</keyword>
<keyword id="KW-1003">Cell membrane</keyword>
<keyword id="KW-1015">Disulfide bond</keyword>
<keyword id="KW-0325">Glycoprotein</keyword>
<keyword id="KW-0407">Ion channel</keyword>
<keyword id="KW-0406">Ion transport</keyword>
<keyword id="KW-1071">Ligand-gated ion channel</keyword>
<keyword id="KW-0472">Membrane</keyword>
<keyword id="KW-0597">Phosphoprotein</keyword>
<keyword id="KW-1267">Proteomics identification</keyword>
<keyword id="KW-0675">Receptor</keyword>
<keyword id="KW-1185">Reference proteome</keyword>
<keyword id="KW-0732">Signal</keyword>
<keyword id="KW-0770">Synapse</keyword>
<keyword id="KW-0812">Transmembrane</keyword>
<keyword id="KW-1133">Transmembrane helix</keyword>
<keyword id="KW-0813">Transport</keyword>
<organism>
    <name type="scientific">Homo sapiens</name>
    <name type="common">Human</name>
    <dbReference type="NCBI Taxonomy" id="9606"/>
    <lineage>
        <taxon>Eukaryota</taxon>
        <taxon>Metazoa</taxon>
        <taxon>Chordata</taxon>
        <taxon>Craniata</taxon>
        <taxon>Vertebrata</taxon>
        <taxon>Euteleostomi</taxon>
        <taxon>Mammalia</taxon>
        <taxon>Eutheria</taxon>
        <taxon>Euarchontoglires</taxon>
        <taxon>Primates</taxon>
        <taxon>Haplorrhini</taxon>
        <taxon>Catarrhini</taxon>
        <taxon>Hominidae</taxon>
        <taxon>Homo</taxon>
    </lineage>
</organism>